<feature type="signal peptide" evidence="1">
    <location>
        <begin position="1"/>
        <end position="25"/>
    </location>
</feature>
<feature type="chain" id="PRO_1000134841" description="Flagellar P-ring protein">
    <location>
        <begin position="26"/>
        <end position="371"/>
    </location>
</feature>
<comment type="function">
    <text evidence="1">Assembles around the rod to form the L-ring and probably protects the motor/basal body from shearing forces during rotation.</text>
</comment>
<comment type="subunit">
    <text evidence="1">The basal body constitutes a major portion of the flagellar organelle and consists of four rings (L,P,S, and M) mounted on a central rod.</text>
</comment>
<comment type="subcellular location">
    <subcellularLocation>
        <location evidence="1">Periplasm</location>
    </subcellularLocation>
    <subcellularLocation>
        <location evidence="1">Bacterial flagellum basal body</location>
    </subcellularLocation>
</comment>
<comment type="similarity">
    <text evidence="1">Belongs to the FlgI family.</text>
</comment>
<proteinExistence type="inferred from homology"/>
<keyword id="KW-0975">Bacterial flagellum</keyword>
<keyword id="KW-0574">Periplasm</keyword>
<keyword id="KW-1185">Reference proteome</keyword>
<keyword id="KW-0732">Signal</keyword>
<organism>
    <name type="scientific">Sinorhizobium fredii (strain NBRC 101917 / NGR234)</name>
    <dbReference type="NCBI Taxonomy" id="394"/>
    <lineage>
        <taxon>Bacteria</taxon>
        <taxon>Pseudomonadati</taxon>
        <taxon>Pseudomonadota</taxon>
        <taxon>Alphaproteobacteria</taxon>
        <taxon>Hyphomicrobiales</taxon>
        <taxon>Rhizobiaceae</taxon>
        <taxon>Sinorhizobium/Ensifer group</taxon>
        <taxon>Sinorhizobium</taxon>
    </lineage>
</organism>
<gene>
    <name evidence="1" type="primary">flgI</name>
    <name type="ordered locus">NGR_c02790</name>
</gene>
<sequence length="371" mass="38362">MTMRVCKWLLTFALLFAATLTPAHSASRIKDVASLQAGRDNQLIGYGLVVGLQGTGDSLRSSPFTDQSIRAMLQNLGISTQGGESRTRNVAAVLVTATLPPFASPGSRVDVTVGSLGDATSLRGGTLVMTSLSGADGQIYAVAQGSIVVTGFSAQGDAASLSQGVTTAGRVPNGAIIERELPSKFKDGFNLVLQLRNPDFSTAVGMAAAINKFASAQFGGRIAEALDSQSVLVQKPKMADLARLMADIENLVVETDVPARVVVNERTGTIVIGQDVRVNEVAVSYGTLTVQVTETPTVVQPAPFSRGETAVEPNTTIEAQSDGGTVAILNGSSLRSLVAGLNSIGVKPDGIIAILQSIKTAGALQAELVLQ</sequence>
<accession>C3MG26</accession>
<protein>
    <recommendedName>
        <fullName evidence="1">Flagellar P-ring protein</fullName>
    </recommendedName>
    <alternativeName>
        <fullName evidence="1">Basal body P-ring protein</fullName>
    </alternativeName>
</protein>
<reference key="1">
    <citation type="journal article" date="2009" name="Appl. Environ. Microbiol.">
        <title>Rhizobium sp. strain NGR234 possesses a remarkable number of secretion systems.</title>
        <authorList>
            <person name="Schmeisser C."/>
            <person name="Liesegang H."/>
            <person name="Krysciak D."/>
            <person name="Bakkou N."/>
            <person name="Le Quere A."/>
            <person name="Wollherr A."/>
            <person name="Heinemeyer I."/>
            <person name="Morgenstern B."/>
            <person name="Pommerening-Roeser A."/>
            <person name="Flores M."/>
            <person name="Palacios R."/>
            <person name="Brenner S."/>
            <person name="Gottschalk G."/>
            <person name="Schmitz R.A."/>
            <person name="Broughton W.J."/>
            <person name="Perret X."/>
            <person name="Strittmatter A.W."/>
            <person name="Streit W.R."/>
        </authorList>
    </citation>
    <scope>NUCLEOTIDE SEQUENCE [LARGE SCALE GENOMIC DNA]</scope>
    <source>
        <strain>NBRC 101917 / NGR234</strain>
    </source>
</reference>
<name>FLGI_SINFN</name>
<dbReference type="EMBL" id="CP001389">
    <property type="protein sequence ID" value="ACP24077.1"/>
    <property type="molecule type" value="Genomic_DNA"/>
</dbReference>
<dbReference type="RefSeq" id="WP_012706862.1">
    <property type="nucleotide sequence ID" value="NC_012587.1"/>
</dbReference>
<dbReference type="RefSeq" id="YP_002824830.1">
    <property type="nucleotide sequence ID" value="NC_012587.1"/>
</dbReference>
<dbReference type="SMR" id="C3MG26"/>
<dbReference type="STRING" id="394.NGR_c02790"/>
<dbReference type="KEGG" id="rhi:NGR_c02790"/>
<dbReference type="PATRIC" id="fig|394.7.peg.3080"/>
<dbReference type="eggNOG" id="COG1706">
    <property type="taxonomic scope" value="Bacteria"/>
</dbReference>
<dbReference type="HOGENOM" id="CLU_045235_1_0_5"/>
<dbReference type="OrthoDB" id="9786431at2"/>
<dbReference type="Proteomes" id="UP000001054">
    <property type="component" value="Chromosome"/>
</dbReference>
<dbReference type="GO" id="GO:0009428">
    <property type="term" value="C:bacterial-type flagellum basal body, distal rod, P ring"/>
    <property type="evidence" value="ECO:0007669"/>
    <property type="project" value="InterPro"/>
</dbReference>
<dbReference type="GO" id="GO:0030288">
    <property type="term" value="C:outer membrane-bounded periplasmic space"/>
    <property type="evidence" value="ECO:0007669"/>
    <property type="project" value="InterPro"/>
</dbReference>
<dbReference type="GO" id="GO:0005198">
    <property type="term" value="F:structural molecule activity"/>
    <property type="evidence" value="ECO:0007669"/>
    <property type="project" value="InterPro"/>
</dbReference>
<dbReference type="GO" id="GO:0071973">
    <property type="term" value="P:bacterial-type flagellum-dependent cell motility"/>
    <property type="evidence" value="ECO:0007669"/>
    <property type="project" value="InterPro"/>
</dbReference>
<dbReference type="HAMAP" id="MF_00416">
    <property type="entry name" value="FlgI"/>
    <property type="match status" value="1"/>
</dbReference>
<dbReference type="InterPro" id="IPR001782">
    <property type="entry name" value="Flag_FlgI"/>
</dbReference>
<dbReference type="NCBIfam" id="NF003676">
    <property type="entry name" value="PRK05303.1"/>
    <property type="match status" value="1"/>
</dbReference>
<dbReference type="PANTHER" id="PTHR30381">
    <property type="entry name" value="FLAGELLAR P-RING PERIPLASMIC PROTEIN FLGI"/>
    <property type="match status" value="1"/>
</dbReference>
<dbReference type="PANTHER" id="PTHR30381:SF0">
    <property type="entry name" value="FLAGELLAR P-RING PROTEIN"/>
    <property type="match status" value="1"/>
</dbReference>
<dbReference type="Pfam" id="PF02119">
    <property type="entry name" value="FlgI"/>
    <property type="match status" value="1"/>
</dbReference>
<dbReference type="PRINTS" id="PR01010">
    <property type="entry name" value="FLGPRINGFLGI"/>
</dbReference>
<evidence type="ECO:0000255" key="1">
    <source>
        <dbReference type="HAMAP-Rule" id="MF_00416"/>
    </source>
</evidence>